<dbReference type="EMBL" id="AF331042">
    <property type="protein sequence ID" value="AAG48354.2"/>
    <property type="molecule type" value="Genomic_DNA"/>
</dbReference>
<dbReference type="EMBL" id="CP000626">
    <property type="protein sequence ID" value="ABQ19159.1"/>
    <property type="molecule type" value="Genomic_DNA"/>
</dbReference>
<dbReference type="EMBL" id="CP001236">
    <property type="protein sequence ID" value="ACP11869.1"/>
    <property type="molecule type" value="Genomic_DNA"/>
</dbReference>
<dbReference type="PIR" id="D82390">
    <property type="entry name" value="D82390"/>
</dbReference>
<dbReference type="RefSeq" id="WP_000147723.1">
    <property type="nucleotide sequence ID" value="NZ_JAACZH010000003.1"/>
</dbReference>
<dbReference type="TCDB" id="2.A.62.1.6">
    <property type="family name" value="the nhad na(+):h(+) antiporter (nhad) family"/>
</dbReference>
<dbReference type="DNASU" id="2612475"/>
<dbReference type="KEGG" id="vco:VC0395_0225"/>
<dbReference type="KEGG" id="vcr:VC395_A1039"/>
<dbReference type="PATRIC" id="fig|345073.21.peg.3762"/>
<dbReference type="eggNOG" id="COG1055">
    <property type="taxonomic scope" value="Bacteria"/>
</dbReference>
<dbReference type="HOGENOM" id="CLU_029697_0_0_6"/>
<dbReference type="OrthoDB" id="9772058at2"/>
<dbReference type="Proteomes" id="UP000000249">
    <property type="component" value="Chromosome 1"/>
</dbReference>
<dbReference type="GO" id="GO:0005886">
    <property type="term" value="C:plasma membrane"/>
    <property type="evidence" value="ECO:0007669"/>
    <property type="project" value="UniProtKB-SubCell"/>
</dbReference>
<dbReference type="GO" id="GO:0015297">
    <property type="term" value="F:antiporter activity"/>
    <property type="evidence" value="ECO:0007669"/>
    <property type="project" value="UniProtKB-KW"/>
</dbReference>
<dbReference type="GO" id="GO:0006814">
    <property type="term" value="P:sodium ion transport"/>
    <property type="evidence" value="ECO:0007669"/>
    <property type="project" value="UniProtKB-KW"/>
</dbReference>
<dbReference type="InterPro" id="IPR004680">
    <property type="entry name" value="Cit_transptr-like_dom"/>
</dbReference>
<dbReference type="InterPro" id="IPR045016">
    <property type="entry name" value="NhaD-like"/>
</dbReference>
<dbReference type="NCBIfam" id="NF038006">
    <property type="entry name" value="NhaD_1"/>
    <property type="match status" value="1"/>
</dbReference>
<dbReference type="PANTHER" id="PTHR43269">
    <property type="entry name" value="SODIUM/PROTON ANTIPORTER 1-RELATED"/>
    <property type="match status" value="1"/>
</dbReference>
<dbReference type="PANTHER" id="PTHR43269:SF2">
    <property type="entry name" value="SODIUM_PROTON ANTIPORTER 1-RELATED"/>
    <property type="match status" value="1"/>
</dbReference>
<dbReference type="Pfam" id="PF03600">
    <property type="entry name" value="CitMHS"/>
    <property type="match status" value="1"/>
</dbReference>
<feature type="chain" id="PRO_0000423661" description="Na(+)/H(+) antiporter NhaD">
    <location>
        <begin position="1"/>
        <end position="477"/>
    </location>
</feature>
<feature type="topological domain" description="Periplasmic" evidence="1">
    <location>
        <begin position="1"/>
        <end position="33"/>
    </location>
</feature>
<feature type="transmembrane region" description="Helical" evidence="1">
    <location>
        <begin position="34"/>
        <end position="51"/>
    </location>
</feature>
<feature type="topological domain" description="Cytoplasmic" evidence="1">
    <location>
        <begin position="52"/>
        <end position="60"/>
    </location>
</feature>
<feature type="transmembrane region" description="Helical" evidence="1">
    <location>
        <begin position="61"/>
        <end position="78"/>
    </location>
</feature>
<feature type="topological domain" description="Periplasmic" evidence="1">
    <location>
        <begin position="79"/>
        <end position="94"/>
    </location>
</feature>
<feature type="transmembrane region" description="Helical" evidence="1">
    <location>
        <begin position="95"/>
        <end position="112"/>
    </location>
</feature>
<feature type="topological domain" description="Cytoplasmic" evidence="1">
    <location>
        <begin position="113"/>
        <end position="132"/>
    </location>
</feature>
<feature type="transmembrane region" description="Helical" evidence="1">
    <location>
        <begin position="133"/>
        <end position="150"/>
    </location>
</feature>
<feature type="topological domain" description="Periplasmic" evidence="1">
    <location>
        <begin position="151"/>
        <end position="154"/>
    </location>
</feature>
<feature type="transmembrane region" description="Helical" evidence="1">
    <location>
        <begin position="155"/>
        <end position="171"/>
    </location>
</feature>
<feature type="topological domain" description="Cytoplasmic" evidence="1">
    <location>
        <begin position="172"/>
        <end position="181"/>
    </location>
</feature>
<feature type="transmembrane region" description="Helical" evidence="1">
    <location>
        <begin position="182"/>
        <end position="206"/>
    </location>
</feature>
<feature type="topological domain" description="Periplasmic" evidence="1">
    <location>
        <begin position="207"/>
        <end position="220"/>
    </location>
</feature>
<feature type="transmembrane region" description="Helical" evidence="1">
    <location>
        <begin position="221"/>
        <end position="238"/>
    </location>
</feature>
<feature type="topological domain" description="Cytoplasmic" evidence="1">
    <location>
        <begin position="239"/>
        <end position="258"/>
    </location>
</feature>
<feature type="transmembrane region" description="Helical" evidence="1">
    <location>
        <begin position="259"/>
        <end position="277"/>
    </location>
</feature>
<feature type="topological domain" description="Periplasmic" evidence="1">
    <location>
        <begin position="278"/>
        <end position="281"/>
    </location>
</feature>
<feature type="transmembrane region" description="Helical" evidence="1">
    <location>
        <begin position="282"/>
        <end position="299"/>
    </location>
</feature>
<feature type="topological domain" description="Cytoplasmic" evidence="1">
    <location>
        <begin position="300"/>
        <end position="344"/>
    </location>
</feature>
<feature type="transmembrane region" description="Helical" evidence="1">
    <location>
        <begin position="345"/>
        <end position="362"/>
    </location>
</feature>
<feature type="topological domain" description="Periplasmic" evidence="1">
    <location>
        <begin position="363"/>
        <end position="378"/>
    </location>
</feature>
<feature type="transmembrane region" description="Helical" evidence="1">
    <location>
        <begin position="379"/>
        <end position="403"/>
    </location>
</feature>
<feature type="topological domain" description="Cytoplasmic" evidence="1">
    <location>
        <begin position="404"/>
        <end position="413"/>
    </location>
</feature>
<feature type="transmembrane region" description="Helical" evidence="1">
    <location>
        <begin position="414"/>
        <end position="438"/>
    </location>
</feature>
<feature type="topological domain" description="Periplasmic" evidence="1">
    <location>
        <begin position="439"/>
        <end position="454"/>
    </location>
</feature>
<feature type="transmembrane region" description="Helical" evidence="1">
    <location>
        <begin position="455"/>
        <end position="472"/>
    </location>
</feature>
<feature type="topological domain" description="Cytoplasmic" evidence="1">
    <location>
        <begin position="473"/>
        <end position="477"/>
    </location>
</feature>
<feature type="mutagenesis site" description="Shifts the pH optimum to more acidic pH." evidence="4">
    <original>H</original>
    <variation>A</variation>
    <location>
        <position position="93"/>
    </location>
</feature>
<feature type="mutagenesis site" description="No change in activity. Shifts the pH optimum to more alkaline pH." evidence="3">
    <original>E</original>
    <variation>A</variation>
    <location>
        <position position="100"/>
    </location>
</feature>
<feature type="mutagenesis site" description="Lack of activity." evidence="4">
    <original>S</original>
    <variation>A</variation>
    <location>
        <position position="150"/>
    </location>
</feature>
<feature type="mutagenesis site" description="Lack of activity." evidence="4">
    <original>D</original>
    <variation>G</variation>
    <location>
        <position position="154"/>
    </location>
</feature>
<feature type="mutagenesis site" description="Lack of activity." evidence="4">
    <original>N</original>
    <variation>A</variation>
    <location>
        <position position="155"/>
    </location>
</feature>
<feature type="mutagenesis site" description="Decrease in activity." evidence="4">
    <original>T</original>
    <variation>A</variation>
    <location>
        <position position="157"/>
    </location>
</feature>
<feature type="mutagenesis site" description="Lack of activity." evidence="4">
    <original>N</original>
    <variation>A</variation>
    <location>
        <position position="189"/>
    </location>
</feature>
<feature type="mutagenesis site" description="Lack of activity." evidence="4">
    <original>D</original>
    <variation>A</variation>
    <location>
        <position position="199"/>
    </location>
</feature>
<feature type="mutagenesis site" description="Lack of activity." evidence="4">
    <original>T</original>
    <variation>A</variation>
    <location>
        <position position="201"/>
    </location>
</feature>
<feature type="mutagenesis site" description="Lack of activity." evidence="4">
    <original>T</original>
    <variation>A</variation>
    <location>
        <position position="202"/>
    </location>
</feature>
<feature type="mutagenesis site" description="Shifts the pH optimum to more acidic pH." evidence="4">
    <original>H</original>
    <variation>A</variation>
    <location>
        <position position="210"/>
    </location>
</feature>
<feature type="mutagenesis site" description="No change in activity. Shifts the pH optimum to more alkaline pH." evidence="3">
    <original>E</original>
    <variation>A</variation>
    <location>
        <position position="251"/>
    </location>
</feature>
<feature type="mutagenesis site" description="No change in activity." evidence="4">
    <original>H</original>
    <variation>A</variation>
    <location>
        <position position="274"/>
    </location>
</feature>
<feature type="mutagenesis site" description="No change in activity." evidence="4">
    <original>H</original>
    <variation>A</variation>
    <location>
        <position position="278"/>
    </location>
</feature>
<feature type="mutagenesis site" description="No change in activity. Shifts the pH optimum to more alkaline pH." evidence="3">
    <original>E</original>
    <variation>A</variation>
    <location>
        <position position="342"/>
    </location>
</feature>
<feature type="mutagenesis site" description="Lack of activity." evidence="3">
    <original>D</original>
    <variation>A</variation>
    <variation>N</variation>
    <location>
        <position position="344"/>
    </location>
</feature>
<feature type="mutagenesis site" description="Decrease in activity." evidence="3">
    <original>D</original>
    <variation>E</variation>
    <location>
        <position position="344"/>
    </location>
</feature>
<feature type="mutagenesis site" description="Lack of activity." evidence="3">
    <original>T</original>
    <variation>A</variation>
    <location>
        <position position="345"/>
    </location>
</feature>
<feature type="mutagenesis site" description="Lack of activity." evidence="4">
    <original>S</original>
    <variation>A</variation>
    <location>
        <position position="389"/>
    </location>
</feature>
<feature type="mutagenesis site" description="No change in activity." evidence="4">
    <original>S</original>
    <variation>A</variation>
    <location>
        <position position="390"/>
    </location>
</feature>
<feature type="mutagenesis site" description="No change in activity. Shifts the pH optimum to more alkaline pH." evidence="3">
    <original>D</original>
    <variation>A</variation>
    <location>
        <position position="393"/>
    </location>
</feature>
<feature type="mutagenesis site" description="Lack of activity." evidence="3">
    <original>D</original>
    <variation>E</variation>
    <variation>N</variation>
    <location>
        <position position="393"/>
    </location>
</feature>
<feature type="mutagenesis site" description="Lack of activity." evidence="4">
    <original>N</original>
    <variation>G</variation>
    <location>
        <position position="394"/>
    </location>
</feature>
<feature type="mutagenesis site" description="Lack of activity." evidence="4">
    <original>S</original>
    <variation>A</variation>
    <location>
        <position position="425"/>
    </location>
</feature>
<feature type="mutagenesis site" description="Decrease in activity." evidence="4">
    <original>S</original>
    <variation>A</variation>
    <location>
        <position position="428"/>
    </location>
</feature>
<feature type="mutagenesis site" description="Lack of activity." evidence="4">
    <original>S</original>
    <variation>A</variation>
    <location>
        <position position="431"/>
    </location>
</feature>
<feature type="mutagenesis site" description="No change in activity." evidence="4">
    <original>H</original>
    <variation>A</variation>
    <location>
        <position position="450"/>
    </location>
</feature>
<feature type="mutagenesis site" description="No change in activity." evidence="4">
    <original>H</original>
    <variation>A</variation>
    <location>
        <position position="468"/>
    </location>
</feature>
<proteinExistence type="evidence at protein level"/>
<sequence>MTGRIALLSLTLFSPLSLASTPDGQALDFTHSTIGYAALLIFAIAYTLVMLEEYLQLRKSKPVLLAAGLIWAMIGYVYQQTGSTEVARQALEHNLLEYAELLLFLLVAMTYISAMEERRLFDALKAWMINRGFNFHTLFWITGWLAFFISPIADNLTTALLMCAVVMKVGGENPKFVSLACINIVIAANAGGAFSPFGDITTLMVWQAGHVSFLEFMDLFLPSLANYLVPALVMSLFVPHQTPSSIQEVVELKRGAKRIVVLFLFTILSAIGFHAFFHFPPVIGMMMGLAYLQFFGYFLRKTLARSLAKKTAIAMAKNDEAALKRIGSVVPFDVFRSISHAEWDTLLFFYGVVMCVGGLSLLGYLGLVSEILYTEWNPIWANVLVGLLSSVVDNIPVMFAVLSMQPEMSLGNWLLVTLTAGVGGSLLSIGSAAGVALMGAAHGKYTFLSHLKWTPVILLGYVVSIVLHLLLNHQSFT</sequence>
<evidence type="ECO:0000255" key="1"/>
<evidence type="ECO:0000269" key="2">
    <source>
    </source>
</evidence>
<evidence type="ECO:0000269" key="3">
    <source>
    </source>
</evidence>
<evidence type="ECO:0000269" key="4">
    <source>
    </source>
</evidence>
<evidence type="ECO:0000305" key="5"/>
<gene>
    <name type="primary">nhaD</name>
    <name type="ordered locus">VC0395_0225</name>
    <name type="ordered locus">VC395_A1039</name>
</gene>
<comment type="function">
    <text evidence="2 3 4">Na(+)/H(+) antiporter that extrudes sodium in exchange for external protons. Can also transport lithium.</text>
</comment>
<comment type="biophysicochemical properties">
    <phDependence>
        <text evidence="2">Optimum pH is 8.0. Totally inactive at pH 9.0.</text>
    </phDependence>
</comment>
<comment type="subcellular location">
    <subcellularLocation>
        <location evidence="2 4">Cell inner membrane</location>
        <topology evidence="2 4">Multi-pass membrane protein</topology>
    </subcellularLocation>
</comment>
<comment type="similarity">
    <text evidence="5">Belongs to the NhaD Na(+)/H(+) (TC 2.A.62) antiporter family.</text>
</comment>
<organism>
    <name type="scientific">Vibrio cholerae serotype O1 (strain ATCC 39541 / Classical Ogawa 395 / O395)</name>
    <dbReference type="NCBI Taxonomy" id="345073"/>
    <lineage>
        <taxon>Bacteria</taxon>
        <taxon>Pseudomonadati</taxon>
        <taxon>Pseudomonadota</taxon>
        <taxon>Gammaproteobacteria</taxon>
        <taxon>Vibrionales</taxon>
        <taxon>Vibrionaceae</taxon>
        <taxon>Vibrio</taxon>
    </lineage>
</organism>
<protein>
    <recommendedName>
        <fullName>Na(+)/H(+) antiporter NhaD</fullName>
    </recommendedName>
    <alternativeName>
        <fullName>Sodium/proton antiporter NhaD</fullName>
    </alternativeName>
</protein>
<reference key="1">
    <citation type="journal article" date="2002" name="Mol. Cell. Biochem.">
        <title>Cloning, functional expression in Escherichia coli and primary characterization of a new Na+/H+ antiporter, NhaD, of Vibrio cholerae.</title>
        <authorList>
            <person name="Dzioba J."/>
            <person name="Ostroumov E."/>
            <person name="Winogrodzki A."/>
            <person name="Dibrov P."/>
        </authorList>
    </citation>
    <scope>NUCLEOTIDE SEQUENCE [GENOMIC DNA]</scope>
    <scope>FUNCTION</scope>
    <scope>BIOPHYSICOCHEMICAL PROPERTIES</scope>
    <scope>SUBCELLULAR LOCATION</scope>
    <source>
        <strain>ATCC 39541 / Classical Ogawa 395 / O395</strain>
    </source>
</reference>
<reference key="2">
    <citation type="submission" date="2007-03" db="EMBL/GenBank/DDBJ databases">
        <authorList>
            <person name="Heidelberg J."/>
        </authorList>
    </citation>
    <scope>NUCLEOTIDE SEQUENCE [LARGE SCALE GENOMIC DNA]</scope>
    <source>
        <strain>ATCC 39541 / Classical Ogawa 395 / O395</strain>
    </source>
</reference>
<reference key="3">
    <citation type="journal article" date="2008" name="PLoS ONE">
        <title>A recalibrated molecular clock and independent origins for the cholera pandemic clones.</title>
        <authorList>
            <person name="Feng L."/>
            <person name="Reeves P.R."/>
            <person name="Lan R."/>
            <person name="Ren Y."/>
            <person name="Gao C."/>
            <person name="Zhou Z."/>
            <person name="Ren Y."/>
            <person name="Cheng J."/>
            <person name="Wang W."/>
            <person name="Wang J."/>
            <person name="Qian W."/>
            <person name="Li D."/>
            <person name="Wang L."/>
        </authorList>
    </citation>
    <scope>NUCLEOTIDE SEQUENCE [LARGE SCALE GENOMIC DNA]</scope>
    <source>
        <strain>ATCC 39541 / Classical Ogawa 395 / O395</strain>
    </source>
</reference>
<reference key="4">
    <citation type="journal article" date="2002" name="Biochim. Biophys. Acta">
        <title>Asp(344) and Thr(345) are critical for cation exchange mediated by NhaD, Na(+)/H(+) antiporter of Vibrio cholerae.</title>
        <authorList>
            <person name="Ostroumov E."/>
            <person name="Dzioba J."/>
            <person name="Loewen P.C."/>
            <person name="Dibrov P."/>
        </authorList>
    </citation>
    <scope>PROTEIN SEQUENCE OF 1-13</scope>
    <scope>FUNCTION</scope>
    <scope>MUTAGENESIS OF GLU-100; GLU-251; GLU-342; ASP-344; THR-345 AND ASP-393</scope>
    <source>
        <strain>ATCC 39541 / Classical Ogawa 395 / O395</strain>
    </source>
</reference>
<reference key="5">
    <citation type="journal article" date="2005" name="J. Biol. Chem.">
        <title>Functional analysis of conserved polar residues in Vc-NhaD, Na+/H+ antiporter of Vibrio cholerae.</title>
        <authorList>
            <person name="Habibian R."/>
            <person name="Dzioba J."/>
            <person name="Barrett J."/>
            <person name="Galperin M.Y."/>
            <person name="Loewen P.C."/>
            <person name="Dibrov P."/>
        </authorList>
    </citation>
    <scope>FUNCTION</scope>
    <scope>SUBCELLULAR LOCATION</scope>
    <scope>TOPOLOGY</scope>
    <scope>MUTAGENESIS OF HIS-93; SER-150; ASP-154; ASN-155; THR-157; ASN-189; ASP-199; THR-201; THR-202; HIS-210; HIS-274; HIS-278; SER-389; SER-390; ASN-394; SER-425; SER-428; SER-431; HIS-450 AND HIS-468</scope>
    <source>
        <strain>ATCC 39541 / Classical Ogawa 395 / O395</strain>
    </source>
</reference>
<name>NHAD_VIBC3</name>
<accession>A5F120</accession>
<accession>Q7DCN4</accession>
<accession>Q9EYG4</accession>
<accession>Q9KKT5</accession>
<keyword id="KW-0050">Antiport</keyword>
<keyword id="KW-0997">Cell inner membrane</keyword>
<keyword id="KW-1003">Cell membrane</keyword>
<keyword id="KW-0903">Direct protein sequencing</keyword>
<keyword id="KW-0406">Ion transport</keyword>
<keyword id="KW-0472">Membrane</keyword>
<keyword id="KW-0915">Sodium</keyword>
<keyword id="KW-0739">Sodium transport</keyword>
<keyword id="KW-0812">Transmembrane</keyword>
<keyword id="KW-1133">Transmembrane helix</keyword>
<keyword id="KW-0813">Transport</keyword>